<gene>
    <name type="ordered locus">MGAS2096_Spy0328</name>
</gene>
<organism>
    <name type="scientific">Streptococcus pyogenes serotype M12 (strain MGAS2096)</name>
    <dbReference type="NCBI Taxonomy" id="370553"/>
    <lineage>
        <taxon>Bacteria</taxon>
        <taxon>Bacillati</taxon>
        <taxon>Bacillota</taxon>
        <taxon>Bacilli</taxon>
        <taxon>Lactobacillales</taxon>
        <taxon>Streptococcaceae</taxon>
        <taxon>Streptococcus</taxon>
    </lineage>
</organism>
<evidence type="ECO:0000255" key="1">
    <source>
        <dbReference type="HAMAP-Rule" id="MF_00386"/>
    </source>
</evidence>
<keyword id="KW-1003">Cell membrane</keyword>
<keyword id="KW-0472">Membrane</keyword>
<proteinExistence type="inferred from homology"/>
<dbReference type="EMBL" id="CP000261">
    <property type="protein sequence ID" value="ABF35380.1"/>
    <property type="molecule type" value="Genomic_DNA"/>
</dbReference>
<dbReference type="KEGG" id="spj:MGAS2096_Spy0328"/>
<dbReference type="HOGENOM" id="CLU_144811_5_2_9"/>
<dbReference type="GO" id="GO:0005886">
    <property type="term" value="C:plasma membrane"/>
    <property type="evidence" value="ECO:0007669"/>
    <property type="project" value="UniProtKB-SubCell"/>
</dbReference>
<dbReference type="HAMAP" id="MF_00386">
    <property type="entry name" value="UPF0161_YidD"/>
    <property type="match status" value="1"/>
</dbReference>
<dbReference type="InterPro" id="IPR002696">
    <property type="entry name" value="Membr_insert_effic_factor_YidD"/>
</dbReference>
<dbReference type="NCBIfam" id="TIGR00278">
    <property type="entry name" value="membrane protein insertion efficiency factor YidD"/>
    <property type="match status" value="1"/>
</dbReference>
<dbReference type="PANTHER" id="PTHR33383">
    <property type="entry name" value="MEMBRANE PROTEIN INSERTION EFFICIENCY FACTOR-RELATED"/>
    <property type="match status" value="1"/>
</dbReference>
<dbReference type="PANTHER" id="PTHR33383:SF1">
    <property type="entry name" value="MEMBRANE PROTEIN INSERTION EFFICIENCY FACTOR-RELATED"/>
    <property type="match status" value="1"/>
</dbReference>
<dbReference type="Pfam" id="PF01809">
    <property type="entry name" value="YidD"/>
    <property type="match status" value="1"/>
</dbReference>
<dbReference type="SMART" id="SM01234">
    <property type="entry name" value="Haemolytic"/>
    <property type="match status" value="1"/>
</dbReference>
<comment type="function">
    <text evidence="1">Could be involved in insertion of integral membrane proteins into the membrane.</text>
</comment>
<comment type="subcellular location">
    <subcellularLocation>
        <location evidence="1">Cell membrane</location>
        <topology evidence="1">Peripheral membrane protein</topology>
        <orientation evidence="1">Cytoplasmic side</orientation>
    </subcellularLocation>
</comment>
<comment type="similarity">
    <text evidence="1">Belongs to the UPF0161 family.</text>
</comment>
<sequence>MMKKLLIVSVKAYQKYISPLSPPSCRYKPTCSAYMLTAIEKHGTKGILMGIARILRCHPFVAGGVDPVPEDFSLMRNKNTSKNAEKA</sequence>
<name>YIDD_STRPB</name>
<protein>
    <recommendedName>
        <fullName evidence="1">Putative membrane protein insertion efficiency factor</fullName>
    </recommendedName>
</protein>
<accession>Q1JDC8</accession>
<reference key="1">
    <citation type="journal article" date="2006" name="Proc. Natl. Acad. Sci. U.S.A.">
        <title>Molecular genetic anatomy of inter- and intraserotype variation in the human bacterial pathogen group A Streptococcus.</title>
        <authorList>
            <person name="Beres S.B."/>
            <person name="Richter E.W."/>
            <person name="Nagiec M.J."/>
            <person name="Sumby P."/>
            <person name="Porcella S.F."/>
            <person name="DeLeo F.R."/>
            <person name="Musser J.M."/>
        </authorList>
    </citation>
    <scope>NUCLEOTIDE SEQUENCE [LARGE SCALE GENOMIC DNA]</scope>
    <source>
        <strain>MGAS2096</strain>
    </source>
</reference>
<feature type="chain" id="PRO_0000253177" description="Putative membrane protein insertion efficiency factor">
    <location>
        <begin position="1"/>
        <end position="87"/>
    </location>
</feature>